<keyword id="KW-0963">Cytoplasm</keyword>
<keyword id="KW-0251">Elongation factor</keyword>
<keyword id="KW-0648">Protein biosynthesis</keyword>
<protein>
    <recommendedName>
        <fullName evidence="1">Elongation factor Ts</fullName>
        <shortName evidence="1">EF-Ts</shortName>
    </recommendedName>
</protein>
<organism>
    <name type="scientific">Synechococcus sp. (strain JA-3-3Ab)</name>
    <name type="common">Cyanobacteria bacterium Yellowstone A-Prime</name>
    <dbReference type="NCBI Taxonomy" id="321327"/>
    <lineage>
        <taxon>Bacteria</taxon>
        <taxon>Bacillati</taxon>
        <taxon>Cyanobacteriota</taxon>
        <taxon>Cyanophyceae</taxon>
        <taxon>Synechococcales</taxon>
        <taxon>Synechococcaceae</taxon>
        <taxon>Synechococcus</taxon>
    </lineage>
</organism>
<feature type="chain" id="PRO_0000241542" description="Elongation factor Ts">
    <location>
        <begin position="1"/>
        <end position="282"/>
    </location>
</feature>
<feature type="region of interest" description="Involved in Mg(2+) ion dislocation from EF-Tu" evidence="1">
    <location>
        <begin position="81"/>
        <end position="84"/>
    </location>
</feature>
<feature type="region of interest" description="Disordered" evidence="2">
    <location>
        <begin position="218"/>
        <end position="282"/>
    </location>
</feature>
<feature type="compositionally biased region" description="Low complexity" evidence="2">
    <location>
        <begin position="218"/>
        <end position="270"/>
    </location>
</feature>
<feature type="compositionally biased region" description="Basic residues" evidence="2">
    <location>
        <begin position="273"/>
        <end position="282"/>
    </location>
</feature>
<sequence>MSIDAKLVKELREKTGAGMMDCKKALEESGGDMEKAITWLRQKGLAGAAKKASRVAAEGVVDSYIHFGNRIGVLVEVNCETDFVARNEDFKKLVQDIAKQIAACQSVEYVSIDQIPPEVVERERAIEMGKEDLASKPENVREKIVQGRIEKRLKELSLMDQPFIKDSSITVEELVKQHIAKLGENIRVRRFARFVLGEGIEKQEADFAAEVAAQAGLKPAQPAQVAEVAAAPPAEPVADQPAAEPPAESVAPEPVVAESADAEPAPAAEGKPSKKGSTKKKK</sequence>
<reference key="1">
    <citation type="journal article" date="2007" name="ISME J.">
        <title>Population level functional diversity in a microbial community revealed by comparative genomic and metagenomic analyses.</title>
        <authorList>
            <person name="Bhaya D."/>
            <person name="Grossman A.R."/>
            <person name="Steunou A.-S."/>
            <person name="Khuri N."/>
            <person name="Cohan F.M."/>
            <person name="Hamamura N."/>
            <person name="Melendrez M.C."/>
            <person name="Bateson M.M."/>
            <person name="Ward D.M."/>
            <person name="Heidelberg J.F."/>
        </authorList>
    </citation>
    <scope>NUCLEOTIDE SEQUENCE [LARGE SCALE GENOMIC DNA]</scope>
    <source>
        <strain>JA-3-3Ab</strain>
    </source>
</reference>
<comment type="function">
    <text evidence="1">Associates with the EF-Tu.GDP complex and induces the exchange of GDP to GTP. It remains bound to the aminoacyl-tRNA.EF-Tu.GTP complex up to the GTP hydrolysis stage on the ribosome.</text>
</comment>
<comment type="subcellular location">
    <subcellularLocation>
        <location evidence="1">Cytoplasm</location>
    </subcellularLocation>
</comment>
<comment type="similarity">
    <text evidence="1">Belongs to the EF-Ts family.</text>
</comment>
<name>EFTS_SYNJA</name>
<evidence type="ECO:0000255" key="1">
    <source>
        <dbReference type="HAMAP-Rule" id="MF_00050"/>
    </source>
</evidence>
<evidence type="ECO:0000256" key="2">
    <source>
        <dbReference type="SAM" id="MobiDB-lite"/>
    </source>
</evidence>
<dbReference type="EMBL" id="CP000239">
    <property type="protein sequence ID" value="ABC99797.1"/>
    <property type="molecule type" value="Genomic_DNA"/>
</dbReference>
<dbReference type="SMR" id="Q2JQK3"/>
<dbReference type="STRING" id="321327.CYA_1639"/>
<dbReference type="KEGG" id="cya:CYA_1639"/>
<dbReference type="eggNOG" id="COG0264">
    <property type="taxonomic scope" value="Bacteria"/>
</dbReference>
<dbReference type="HOGENOM" id="CLU_047155_1_0_3"/>
<dbReference type="OrthoDB" id="9808348at2"/>
<dbReference type="Proteomes" id="UP000008818">
    <property type="component" value="Chromosome"/>
</dbReference>
<dbReference type="GO" id="GO:0005737">
    <property type="term" value="C:cytoplasm"/>
    <property type="evidence" value="ECO:0007669"/>
    <property type="project" value="UniProtKB-SubCell"/>
</dbReference>
<dbReference type="GO" id="GO:0003746">
    <property type="term" value="F:translation elongation factor activity"/>
    <property type="evidence" value="ECO:0007669"/>
    <property type="project" value="UniProtKB-UniRule"/>
</dbReference>
<dbReference type="CDD" id="cd14275">
    <property type="entry name" value="UBA_EF-Ts"/>
    <property type="match status" value="1"/>
</dbReference>
<dbReference type="FunFam" id="1.10.286.20:FF:000001">
    <property type="entry name" value="Elongation factor Ts"/>
    <property type="match status" value="1"/>
</dbReference>
<dbReference type="FunFam" id="1.10.8.10:FF:000001">
    <property type="entry name" value="Elongation factor Ts"/>
    <property type="match status" value="1"/>
</dbReference>
<dbReference type="Gene3D" id="1.10.286.20">
    <property type="match status" value="1"/>
</dbReference>
<dbReference type="Gene3D" id="1.10.8.10">
    <property type="entry name" value="DNA helicase RuvA subunit, C-terminal domain"/>
    <property type="match status" value="1"/>
</dbReference>
<dbReference type="Gene3D" id="3.30.479.20">
    <property type="entry name" value="Elongation factor Ts, dimerisation domain"/>
    <property type="match status" value="1"/>
</dbReference>
<dbReference type="HAMAP" id="MF_00050">
    <property type="entry name" value="EF_Ts"/>
    <property type="match status" value="1"/>
</dbReference>
<dbReference type="InterPro" id="IPR036402">
    <property type="entry name" value="EF-Ts_dimer_sf"/>
</dbReference>
<dbReference type="InterPro" id="IPR001816">
    <property type="entry name" value="Transl_elong_EFTs/EF1B"/>
</dbReference>
<dbReference type="InterPro" id="IPR014039">
    <property type="entry name" value="Transl_elong_EFTs/EF1B_dimer"/>
</dbReference>
<dbReference type="InterPro" id="IPR018101">
    <property type="entry name" value="Transl_elong_Ts_CS"/>
</dbReference>
<dbReference type="InterPro" id="IPR009060">
    <property type="entry name" value="UBA-like_sf"/>
</dbReference>
<dbReference type="NCBIfam" id="TIGR00116">
    <property type="entry name" value="tsf"/>
    <property type="match status" value="1"/>
</dbReference>
<dbReference type="PANTHER" id="PTHR11741">
    <property type="entry name" value="ELONGATION FACTOR TS"/>
    <property type="match status" value="1"/>
</dbReference>
<dbReference type="PANTHER" id="PTHR11741:SF10">
    <property type="entry name" value="POLYPROTEIN OF EF-TS, CHLOROPLASTIC"/>
    <property type="match status" value="1"/>
</dbReference>
<dbReference type="Pfam" id="PF00889">
    <property type="entry name" value="EF_TS"/>
    <property type="match status" value="2"/>
</dbReference>
<dbReference type="SUPFAM" id="SSF54713">
    <property type="entry name" value="Elongation factor Ts (EF-Ts), dimerisation domain"/>
    <property type="match status" value="1"/>
</dbReference>
<dbReference type="SUPFAM" id="SSF46934">
    <property type="entry name" value="UBA-like"/>
    <property type="match status" value="1"/>
</dbReference>
<dbReference type="PROSITE" id="PS01126">
    <property type="entry name" value="EF_TS_1"/>
    <property type="match status" value="1"/>
</dbReference>
<dbReference type="PROSITE" id="PS01127">
    <property type="entry name" value="EF_TS_2"/>
    <property type="match status" value="1"/>
</dbReference>
<accession>Q2JQK3</accession>
<gene>
    <name evidence="1" type="primary">tsf</name>
    <name type="ordered locus">CYA_1639</name>
</gene>
<proteinExistence type="inferred from homology"/>